<proteinExistence type="inferred from homology"/>
<sequence>MGSRTGSREEHSLQFLNLTKMTTTTASNLPWVEKYRPSKLDELVAHEQIVKTLTKFIENRTLPHLLFYGPPGTGKTTTVLAAARQMYSPTKMASMVLELNASDERGIDVVRNTIVNFAQTKGLQAFSTSSNTGTVPFKLVILDEADAMTKDAQNALRRVIEKYTDNVRFCIICNYLASIVPAIQSRCTRFRFAPLDQKLIVPRLEYIVETEQLKMTPDGKDALLIVSKGDMRTVINTLQSTAMSFDTVSENTVYQCIGQPTPKEMKEVVKTLLNDPSKKCMNTIQTKLFENGYALQDVITHLHDFVFTLDIPDEAMSAIITGLGEVEENLSTGCSNETQLAAVVAAFFEAKRLCVKEMKNLEIEDMEF</sequence>
<gene>
    <name type="ORF">F44B9.8</name>
</gene>
<keyword id="KW-0067">ATP-binding</keyword>
<keyword id="KW-0235">DNA replication</keyword>
<keyword id="KW-0547">Nucleotide-binding</keyword>
<keyword id="KW-0539">Nucleus</keyword>
<keyword id="KW-1185">Reference proteome</keyword>
<accession>P34429</accession>
<accession>Q8ST15</accession>
<feature type="chain" id="PRO_0000121753" description="Probable replication factor C subunit 5">
    <location>
        <begin position="1"/>
        <end position="368"/>
    </location>
</feature>
<feature type="binding site" evidence="2">
    <location>
        <begin position="69"/>
        <end position="76"/>
    </location>
    <ligand>
        <name>ATP</name>
        <dbReference type="ChEBI" id="CHEBI:30616"/>
    </ligand>
</feature>
<organism>
    <name type="scientific">Caenorhabditis elegans</name>
    <dbReference type="NCBI Taxonomy" id="6239"/>
    <lineage>
        <taxon>Eukaryota</taxon>
        <taxon>Metazoa</taxon>
        <taxon>Ecdysozoa</taxon>
        <taxon>Nematoda</taxon>
        <taxon>Chromadorea</taxon>
        <taxon>Rhabditida</taxon>
        <taxon>Rhabditina</taxon>
        <taxon>Rhabditomorpha</taxon>
        <taxon>Rhabditoidea</taxon>
        <taxon>Rhabditidae</taxon>
        <taxon>Peloderinae</taxon>
        <taxon>Caenorhabditis</taxon>
    </lineage>
</organism>
<protein>
    <recommendedName>
        <fullName>Probable replication factor C subunit 5</fullName>
    </recommendedName>
    <alternativeName>
        <fullName>Activator 1 subunit 5</fullName>
    </alternativeName>
</protein>
<name>RFC5_CAEEL</name>
<comment type="function">
    <text evidence="1">The elongation of primed DNA templates by DNA polymerase delta and epsilon requires the action of the accessory proteins proliferating cell nuclear antigen (PCNA) and activator 1.</text>
</comment>
<comment type="subunit">
    <text evidence="1">Heteropentamer of various rfc subunits that forms a complex (RFC) with PCNA in the presence of ATP.</text>
</comment>
<comment type="subcellular location">
    <subcellularLocation>
        <location evidence="3">Nucleus</location>
    </subcellularLocation>
</comment>
<comment type="similarity">
    <text evidence="3">Belongs to the activator 1 small subunits family.</text>
</comment>
<evidence type="ECO:0000250" key="1"/>
<evidence type="ECO:0000255" key="2"/>
<evidence type="ECO:0000305" key="3"/>
<dbReference type="EMBL" id="FO080400">
    <property type="protein sequence ID" value="CCD63451.1"/>
    <property type="molecule type" value="Genomic_DNA"/>
</dbReference>
<dbReference type="PIR" id="S44809">
    <property type="entry name" value="S44809"/>
</dbReference>
<dbReference type="RefSeq" id="NP_498750.2">
    <property type="nucleotide sequence ID" value="NM_066349.8"/>
</dbReference>
<dbReference type="SMR" id="P34429"/>
<dbReference type="BioGRID" id="41337">
    <property type="interactions" value="7"/>
</dbReference>
<dbReference type="DIP" id="DIP-27001N"/>
<dbReference type="FunCoup" id="P34429">
    <property type="interactions" value="2679"/>
</dbReference>
<dbReference type="IntAct" id="P34429">
    <property type="interactions" value="2"/>
</dbReference>
<dbReference type="STRING" id="6239.F44B9.8.1"/>
<dbReference type="PaxDb" id="6239-F44B9.8"/>
<dbReference type="PeptideAtlas" id="P34429"/>
<dbReference type="EnsemblMetazoa" id="F44B9.8.1">
    <property type="protein sequence ID" value="F44B9.8.1"/>
    <property type="gene ID" value="WBGene00018409"/>
</dbReference>
<dbReference type="GeneID" id="176131"/>
<dbReference type="KEGG" id="cel:CELE_F44B9.8"/>
<dbReference type="UCSC" id="F44B9.8">
    <property type="organism name" value="c. elegans"/>
</dbReference>
<dbReference type="AGR" id="WB:WBGene00018409"/>
<dbReference type="CTD" id="176131"/>
<dbReference type="WormBase" id="F44B9.8">
    <property type="protein sequence ID" value="CE37518"/>
    <property type="gene ID" value="WBGene00018409"/>
</dbReference>
<dbReference type="eggNOG" id="KOG0990">
    <property type="taxonomic scope" value="Eukaryota"/>
</dbReference>
<dbReference type="GeneTree" id="ENSGT00550000075072"/>
<dbReference type="HOGENOM" id="CLU_042324_2_0_1"/>
<dbReference type="InParanoid" id="P34429"/>
<dbReference type="OMA" id="AEDNLPW"/>
<dbReference type="OrthoDB" id="10254700at2759"/>
<dbReference type="PhylomeDB" id="P34429"/>
<dbReference type="Reactome" id="R-CEL-110312">
    <property type="pathway name" value="Translesion synthesis by REV1"/>
</dbReference>
<dbReference type="Reactome" id="R-CEL-110314">
    <property type="pathway name" value="Recognition of DNA damage by PCNA-containing replication complex"/>
</dbReference>
<dbReference type="Reactome" id="R-CEL-110320">
    <property type="pathway name" value="Translesion Synthesis by POLH"/>
</dbReference>
<dbReference type="Reactome" id="R-CEL-174411">
    <property type="pathway name" value="Polymerase switching on the C-strand of the telomere"/>
</dbReference>
<dbReference type="Reactome" id="R-CEL-176187">
    <property type="pathway name" value="Activation of ATR in response to replication stress"/>
</dbReference>
<dbReference type="Reactome" id="R-CEL-5651801">
    <property type="pathway name" value="PCNA-Dependent Long Patch Base Excision Repair"/>
</dbReference>
<dbReference type="Reactome" id="R-CEL-5655862">
    <property type="pathway name" value="Translesion synthesis by POLK"/>
</dbReference>
<dbReference type="Reactome" id="R-CEL-5656121">
    <property type="pathway name" value="Translesion synthesis by POLI"/>
</dbReference>
<dbReference type="Reactome" id="R-CEL-5656169">
    <property type="pathway name" value="Termination of translesion DNA synthesis"/>
</dbReference>
<dbReference type="Reactome" id="R-CEL-5693607">
    <property type="pathway name" value="Processing of DNA double-strand break ends"/>
</dbReference>
<dbReference type="Reactome" id="R-CEL-5696397">
    <property type="pathway name" value="Gap-filling DNA repair synthesis and ligation in GG-NER"/>
</dbReference>
<dbReference type="Reactome" id="R-CEL-5696400">
    <property type="pathway name" value="Dual Incision in GG-NER"/>
</dbReference>
<dbReference type="Reactome" id="R-CEL-6782135">
    <property type="pathway name" value="Dual incision in TC-NER"/>
</dbReference>
<dbReference type="Reactome" id="R-CEL-6782210">
    <property type="pathway name" value="Gap-filling DNA repair synthesis and ligation in TC-NER"/>
</dbReference>
<dbReference type="Reactome" id="R-CEL-69091">
    <property type="pathway name" value="Polymerase switching"/>
</dbReference>
<dbReference type="PRO" id="PR:P34429"/>
<dbReference type="Proteomes" id="UP000001940">
    <property type="component" value="Chromosome III"/>
</dbReference>
<dbReference type="Bgee" id="WBGene00018409">
    <property type="expression patterns" value="Expressed in adult organism and 3 other cell types or tissues"/>
</dbReference>
<dbReference type="GO" id="GO:0005663">
    <property type="term" value="C:DNA replication factor C complex"/>
    <property type="evidence" value="ECO:0000318"/>
    <property type="project" value="GO_Central"/>
</dbReference>
<dbReference type="GO" id="GO:0005634">
    <property type="term" value="C:nucleus"/>
    <property type="evidence" value="ECO:0000318"/>
    <property type="project" value="GO_Central"/>
</dbReference>
<dbReference type="GO" id="GO:0005524">
    <property type="term" value="F:ATP binding"/>
    <property type="evidence" value="ECO:0007669"/>
    <property type="project" value="UniProtKB-KW"/>
</dbReference>
<dbReference type="GO" id="GO:0016887">
    <property type="term" value="F:ATP hydrolysis activity"/>
    <property type="evidence" value="ECO:0007669"/>
    <property type="project" value="InterPro"/>
</dbReference>
<dbReference type="GO" id="GO:0003677">
    <property type="term" value="F:DNA binding"/>
    <property type="evidence" value="ECO:0007669"/>
    <property type="project" value="InterPro"/>
</dbReference>
<dbReference type="GO" id="GO:0006281">
    <property type="term" value="P:DNA repair"/>
    <property type="evidence" value="ECO:0000318"/>
    <property type="project" value="GO_Central"/>
</dbReference>
<dbReference type="GO" id="GO:0006261">
    <property type="term" value="P:DNA-templated DNA replication"/>
    <property type="evidence" value="ECO:0000318"/>
    <property type="project" value="GO_Central"/>
</dbReference>
<dbReference type="CDD" id="cd00009">
    <property type="entry name" value="AAA"/>
    <property type="match status" value="1"/>
</dbReference>
<dbReference type="CDD" id="cd18140">
    <property type="entry name" value="HLD_clamp_RFC"/>
    <property type="match status" value="1"/>
</dbReference>
<dbReference type="FunFam" id="1.10.8.60:FF:000028">
    <property type="entry name" value="Replication factor C subunit 5"/>
    <property type="match status" value="1"/>
</dbReference>
<dbReference type="FunFam" id="1.20.272.10:FF:000004">
    <property type="entry name" value="Replication factor C subunit 5"/>
    <property type="match status" value="1"/>
</dbReference>
<dbReference type="FunFam" id="3.40.50.300:FF:003154">
    <property type="entry name" value="Serine/threonine-protein phosphatase"/>
    <property type="match status" value="1"/>
</dbReference>
<dbReference type="Gene3D" id="1.10.8.60">
    <property type="match status" value="1"/>
</dbReference>
<dbReference type="Gene3D" id="1.20.272.10">
    <property type="match status" value="1"/>
</dbReference>
<dbReference type="Gene3D" id="3.40.50.300">
    <property type="entry name" value="P-loop containing nucleotide triphosphate hydrolases"/>
    <property type="match status" value="1"/>
</dbReference>
<dbReference type="InterPro" id="IPR003593">
    <property type="entry name" value="AAA+_ATPase"/>
</dbReference>
<dbReference type="InterPro" id="IPR003959">
    <property type="entry name" value="ATPase_AAA_core"/>
</dbReference>
<dbReference type="InterPro" id="IPR008921">
    <property type="entry name" value="DNA_pol3_clamp-load_cplx_C"/>
</dbReference>
<dbReference type="InterPro" id="IPR050238">
    <property type="entry name" value="DNA_Rep/Repair_Clamp_Loader"/>
</dbReference>
<dbReference type="InterPro" id="IPR027417">
    <property type="entry name" value="P-loop_NTPase"/>
</dbReference>
<dbReference type="InterPro" id="IPR013748">
    <property type="entry name" value="Rep_factorC_C"/>
</dbReference>
<dbReference type="InterPro" id="IPR047854">
    <property type="entry name" value="RFC_lid"/>
</dbReference>
<dbReference type="NCBIfam" id="NF001679">
    <property type="entry name" value="PRK00440.1"/>
    <property type="match status" value="1"/>
</dbReference>
<dbReference type="PANTHER" id="PTHR11669">
    <property type="entry name" value="REPLICATION FACTOR C / DNA POLYMERASE III GAMMA-TAU SUBUNIT"/>
    <property type="match status" value="1"/>
</dbReference>
<dbReference type="PANTHER" id="PTHR11669:SF9">
    <property type="entry name" value="REPLICATION FACTOR C SUBUNIT 5"/>
    <property type="match status" value="1"/>
</dbReference>
<dbReference type="Pfam" id="PF00004">
    <property type="entry name" value="AAA"/>
    <property type="match status" value="1"/>
</dbReference>
<dbReference type="Pfam" id="PF08542">
    <property type="entry name" value="Rep_fac_C"/>
    <property type="match status" value="1"/>
</dbReference>
<dbReference type="SMART" id="SM00382">
    <property type="entry name" value="AAA"/>
    <property type="match status" value="1"/>
</dbReference>
<dbReference type="SUPFAM" id="SSF52540">
    <property type="entry name" value="P-loop containing nucleoside triphosphate hydrolases"/>
    <property type="match status" value="1"/>
</dbReference>
<dbReference type="SUPFAM" id="SSF48019">
    <property type="entry name" value="post-AAA+ oligomerization domain-like"/>
    <property type="match status" value="1"/>
</dbReference>
<reference key="1">
    <citation type="journal article" date="1994" name="Nature">
        <title>2.2 Mb of contiguous nucleotide sequence from chromosome III of C. elegans.</title>
        <authorList>
            <person name="Wilson R."/>
            <person name="Ainscough R."/>
            <person name="Anderson K."/>
            <person name="Baynes C."/>
            <person name="Berks M."/>
            <person name="Bonfield J."/>
            <person name="Burton J."/>
            <person name="Connell M."/>
            <person name="Copsey T."/>
            <person name="Cooper J."/>
            <person name="Coulson A."/>
            <person name="Craxton M."/>
            <person name="Dear S."/>
            <person name="Du Z."/>
            <person name="Durbin R."/>
            <person name="Favello A."/>
            <person name="Fraser A."/>
            <person name="Fulton L."/>
            <person name="Gardner A."/>
            <person name="Green P."/>
            <person name="Hawkins T."/>
            <person name="Hillier L."/>
            <person name="Jier M."/>
            <person name="Johnston L."/>
            <person name="Jones M."/>
            <person name="Kershaw J."/>
            <person name="Kirsten J."/>
            <person name="Laisster N."/>
            <person name="Latreille P."/>
            <person name="Lightning J."/>
            <person name="Lloyd C."/>
            <person name="Mortimore B."/>
            <person name="O'Callaghan M."/>
            <person name="Parsons J."/>
            <person name="Percy C."/>
            <person name="Rifken L."/>
            <person name="Roopra A."/>
            <person name="Saunders D."/>
            <person name="Shownkeen R."/>
            <person name="Sims M."/>
            <person name="Smaldon N."/>
            <person name="Smith A."/>
            <person name="Smith M."/>
            <person name="Sonnhammer E."/>
            <person name="Staden R."/>
            <person name="Sulston J."/>
            <person name="Thierry-Mieg J."/>
            <person name="Thomas K."/>
            <person name="Vaudin M."/>
            <person name="Vaughan K."/>
            <person name="Waterston R."/>
            <person name="Watson A."/>
            <person name="Weinstock L."/>
            <person name="Wilkinson-Sproat J."/>
            <person name="Wohldman P."/>
        </authorList>
    </citation>
    <scope>NUCLEOTIDE SEQUENCE [LARGE SCALE GENOMIC DNA]</scope>
    <source>
        <strain>Bristol N2</strain>
    </source>
</reference>
<reference key="2">
    <citation type="journal article" date="1998" name="Science">
        <title>Genome sequence of the nematode C. elegans: a platform for investigating biology.</title>
        <authorList>
            <consortium name="The C. elegans sequencing consortium"/>
        </authorList>
    </citation>
    <scope>NUCLEOTIDE SEQUENCE [LARGE SCALE GENOMIC DNA]</scope>
    <source>
        <strain>Bristol N2</strain>
    </source>
</reference>